<organism>
    <name type="scientific">Rattus norvegicus</name>
    <name type="common">Rat</name>
    <dbReference type="NCBI Taxonomy" id="10116"/>
    <lineage>
        <taxon>Eukaryota</taxon>
        <taxon>Metazoa</taxon>
        <taxon>Chordata</taxon>
        <taxon>Craniata</taxon>
        <taxon>Vertebrata</taxon>
        <taxon>Euteleostomi</taxon>
        <taxon>Mammalia</taxon>
        <taxon>Eutheria</taxon>
        <taxon>Euarchontoglires</taxon>
        <taxon>Glires</taxon>
        <taxon>Rodentia</taxon>
        <taxon>Myomorpha</taxon>
        <taxon>Muroidea</taxon>
        <taxon>Muridae</taxon>
        <taxon>Murinae</taxon>
        <taxon>Rattus</taxon>
    </lineage>
</organism>
<sequence>MLHTEGHALLRAVGQGKLRLARLLLEGGAYVNEGDAQGETALMAACRARYDDPQNKARMVRYLLEQGADPNIADRLGRTALMHACAGGGGAAVASLLLAHGADPSVRDHAGASALVHALDRGDRETLATLLDACKAKGTEVIIITTDTSPSGTKKTRQYLNSPPSPGVEDPAPAPPSPGVCTSPSEVQLQTAGGGRGLLSPRAQEEEEKRDVFEFPLPKSPDDPSPSEPLPKPPRHPPKPLKRLNSEPWGLVAPPQPVPPAEGRPGLERLAAEFNGLTLTGRPRLSRRHSTEGPEDPPPWAEKVTGGGPLSRRNTAPEAQESGLPSGLRQKLSRMESVELDTPGHFCPDSPESSRLSLERRRYSASPLTLPPAGSVSSPRQSQESLPGAVSPLSGRRRSPGLLERRGSGTLLLDHISQTRPGFLPPLNVSPHPPIPDIRPQPGGRAPSLPAPPHSGAPGSPRTKRKLVRRHSMQTEQIRLLGGFQSLGGPGEPGR</sequence>
<evidence type="ECO:0000250" key="1">
    <source>
        <dbReference type="UniProtKB" id="Q69YU3"/>
    </source>
</evidence>
<evidence type="ECO:0000256" key="2">
    <source>
        <dbReference type="SAM" id="MobiDB-lite"/>
    </source>
</evidence>
<evidence type="ECO:0000305" key="3"/>
<evidence type="ECO:0007744" key="4">
    <source>
    </source>
</evidence>
<protein>
    <recommendedName>
        <fullName>Ankyrin repeat domain-containing protein 34A</fullName>
    </recommendedName>
</protein>
<gene>
    <name type="primary">Ankrd34a</name>
</gene>
<reference key="1">
    <citation type="journal article" date="2004" name="Genome Res.">
        <title>The status, quality, and expansion of the NIH full-length cDNA project: the Mammalian Gene Collection (MGC).</title>
        <authorList>
            <consortium name="The MGC Project Team"/>
        </authorList>
    </citation>
    <scope>NUCLEOTIDE SEQUENCE [LARGE SCALE MRNA]</scope>
    <source>
        <tissue>Brain</tissue>
    </source>
</reference>
<reference key="2">
    <citation type="journal article" date="2012" name="Nat. Commun.">
        <title>Quantitative maps of protein phosphorylation sites across 14 different rat organs and tissues.</title>
        <authorList>
            <person name="Lundby A."/>
            <person name="Secher A."/>
            <person name="Lage K."/>
            <person name="Nordsborg N.B."/>
            <person name="Dmytriyev A."/>
            <person name="Lundby C."/>
            <person name="Olsen J.V."/>
        </authorList>
    </citation>
    <scope>PHOSPHORYLATION [LARGE SCALE ANALYSIS] AT THR-315</scope>
    <scope>IDENTIFICATION BY MASS SPECTROMETRY [LARGE SCALE ANALYSIS]</scope>
</reference>
<comment type="PTM">
    <text evidence="1">Methylated at Gln-15 by N6AMT1.</text>
</comment>
<comment type="similarity">
    <text evidence="3">Belongs to the ANKRD34 family.</text>
</comment>
<feature type="chain" id="PRO_0000319101" description="Ankyrin repeat domain-containing protein 34A">
    <location>
        <begin position="1"/>
        <end position="495"/>
    </location>
</feature>
<feature type="repeat" description="ANK 1">
    <location>
        <begin position="4"/>
        <end position="33"/>
    </location>
</feature>
<feature type="repeat" description="ANK 2">
    <location>
        <begin position="37"/>
        <end position="72"/>
    </location>
</feature>
<feature type="repeat" description="ANK 3">
    <location>
        <begin position="76"/>
        <end position="106"/>
    </location>
</feature>
<feature type="repeat" description="ANK 4">
    <location>
        <begin position="110"/>
        <end position="139"/>
    </location>
</feature>
<feature type="region of interest" description="Disordered" evidence="2">
    <location>
        <begin position="147"/>
        <end position="495"/>
    </location>
</feature>
<feature type="compositionally biased region" description="Polar residues" evidence="2">
    <location>
        <begin position="147"/>
        <end position="162"/>
    </location>
</feature>
<feature type="compositionally biased region" description="Polar residues" evidence="2">
    <location>
        <begin position="180"/>
        <end position="191"/>
    </location>
</feature>
<feature type="compositionally biased region" description="Basic and acidic residues" evidence="2">
    <location>
        <begin position="203"/>
        <end position="213"/>
    </location>
</feature>
<feature type="compositionally biased region" description="Pro residues" evidence="2">
    <location>
        <begin position="223"/>
        <end position="232"/>
    </location>
</feature>
<feature type="compositionally biased region" description="Basic residues" evidence="2">
    <location>
        <begin position="233"/>
        <end position="242"/>
    </location>
</feature>
<feature type="compositionally biased region" description="Polar residues" evidence="2">
    <location>
        <begin position="375"/>
        <end position="385"/>
    </location>
</feature>
<feature type="compositionally biased region" description="Basic residues" evidence="2">
    <location>
        <begin position="462"/>
        <end position="472"/>
    </location>
</feature>
<feature type="compositionally biased region" description="Gly residues" evidence="2">
    <location>
        <begin position="485"/>
        <end position="495"/>
    </location>
</feature>
<feature type="modified residue" description="N5-methylglutamine" evidence="1">
    <location>
        <position position="15"/>
    </location>
</feature>
<feature type="modified residue" description="Phosphothreonine" evidence="4">
    <location>
        <position position="315"/>
    </location>
</feature>
<accession>Q5BJT1</accession>
<dbReference type="EMBL" id="BC091343">
    <property type="protein sequence ID" value="AAH91343.1"/>
    <property type="molecule type" value="mRNA"/>
</dbReference>
<dbReference type="RefSeq" id="NP_001020151.1">
    <property type="nucleotide sequence ID" value="NM_001024980.1"/>
</dbReference>
<dbReference type="RefSeq" id="XP_006233015.1">
    <property type="nucleotide sequence ID" value="XM_006232953.3"/>
</dbReference>
<dbReference type="RefSeq" id="XP_008759505.1">
    <property type="nucleotide sequence ID" value="XM_008761283.4"/>
</dbReference>
<dbReference type="RefSeq" id="XP_038957978.1">
    <property type="nucleotide sequence ID" value="XM_039102050.2"/>
</dbReference>
<dbReference type="RefSeq" id="XP_038957979.1">
    <property type="nucleotide sequence ID" value="XM_039102051.2"/>
</dbReference>
<dbReference type="RefSeq" id="XP_038957980.1">
    <property type="nucleotide sequence ID" value="XM_039102052.2"/>
</dbReference>
<dbReference type="RefSeq" id="XP_063137696.1">
    <property type="nucleotide sequence ID" value="XM_063281626.1"/>
</dbReference>
<dbReference type="SMR" id="Q5BJT1"/>
<dbReference type="FunCoup" id="Q5BJT1">
    <property type="interactions" value="1031"/>
</dbReference>
<dbReference type="STRING" id="10116.ENSRNOP00000053081"/>
<dbReference type="iPTMnet" id="Q5BJT1"/>
<dbReference type="PhosphoSitePlus" id="Q5BJT1"/>
<dbReference type="PaxDb" id="10116-ENSRNOP00000053081"/>
<dbReference type="Ensembl" id="ENSRNOT00000043535.4">
    <property type="protein sequence ID" value="ENSRNOP00000053081.2"/>
    <property type="gene ID" value="ENSRNOG00000033741.4"/>
</dbReference>
<dbReference type="Ensembl" id="ENSRNOT00000113092.1">
    <property type="protein sequence ID" value="ENSRNOP00000095983.1"/>
    <property type="gene ID" value="ENSRNOG00000033741.4"/>
</dbReference>
<dbReference type="GeneID" id="295283"/>
<dbReference type="KEGG" id="rno:295283"/>
<dbReference type="UCSC" id="RGD:1308412">
    <property type="organism name" value="rat"/>
</dbReference>
<dbReference type="AGR" id="RGD:1308412"/>
<dbReference type="CTD" id="284615"/>
<dbReference type="RGD" id="1308412">
    <property type="gene designation" value="Ankrd34a"/>
</dbReference>
<dbReference type="eggNOG" id="ENOG502QT4A">
    <property type="taxonomic scope" value="Eukaryota"/>
</dbReference>
<dbReference type="GeneTree" id="ENSGT00390000012355"/>
<dbReference type="HOGENOM" id="CLU_042805_0_0_1"/>
<dbReference type="InParanoid" id="Q5BJT1"/>
<dbReference type="OMA" id="PGNLCPD"/>
<dbReference type="OrthoDB" id="539213at2759"/>
<dbReference type="PhylomeDB" id="Q5BJT1"/>
<dbReference type="TreeFam" id="TF331155"/>
<dbReference type="PRO" id="PR:Q5BJT1"/>
<dbReference type="Proteomes" id="UP000002494">
    <property type="component" value="Chromosome 2"/>
</dbReference>
<dbReference type="Bgee" id="ENSRNOG00000033741">
    <property type="expression patterns" value="Expressed in frontal cortex and 11 other cell types or tissues"/>
</dbReference>
<dbReference type="Gene3D" id="1.25.40.20">
    <property type="entry name" value="Ankyrin repeat-containing domain"/>
    <property type="match status" value="1"/>
</dbReference>
<dbReference type="InterPro" id="IPR042637">
    <property type="entry name" value="AN34A/B/C"/>
</dbReference>
<dbReference type="InterPro" id="IPR002110">
    <property type="entry name" value="Ankyrin_rpt"/>
</dbReference>
<dbReference type="InterPro" id="IPR036770">
    <property type="entry name" value="Ankyrin_rpt-contain_sf"/>
</dbReference>
<dbReference type="PANTHER" id="PTHR24156">
    <property type="entry name" value="ANK_REP_REGION DOMAIN-CONTAINING PROTEIN"/>
    <property type="match status" value="1"/>
</dbReference>
<dbReference type="PANTHER" id="PTHR24156:SF4">
    <property type="entry name" value="ANKYRIN REPEAT DOMAIN 34A"/>
    <property type="match status" value="1"/>
</dbReference>
<dbReference type="Pfam" id="PF12796">
    <property type="entry name" value="Ank_2"/>
    <property type="match status" value="1"/>
</dbReference>
<dbReference type="SMART" id="SM00248">
    <property type="entry name" value="ANK"/>
    <property type="match status" value="4"/>
</dbReference>
<dbReference type="SUPFAM" id="SSF48403">
    <property type="entry name" value="Ankyrin repeat"/>
    <property type="match status" value="1"/>
</dbReference>
<dbReference type="PROSITE" id="PS50297">
    <property type="entry name" value="ANK_REP_REGION"/>
    <property type="match status" value="1"/>
</dbReference>
<dbReference type="PROSITE" id="PS50088">
    <property type="entry name" value="ANK_REPEAT"/>
    <property type="match status" value="2"/>
</dbReference>
<proteinExistence type="evidence at protein level"/>
<keyword id="KW-0040">ANK repeat</keyword>
<keyword id="KW-0488">Methylation</keyword>
<keyword id="KW-0597">Phosphoprotein</keyword>
<keyword id="KW-1185">Reference proteome</keyword>
<keyword id="KW-0677">Repeat</keyword>
<name>AN34A_RAT</name>